<name>GLMU_DINSH</name>
<gene>
    <name evidence="1" type="primary">glmU</name>
    <name type="ordered locus">Dshi_1294</name>
</gene>
<organism>
    <name type="scientific">Dinoroseobacter shibae (strain DSM 16493 / NCIMB 14021 / DFL 12)</name>
    <dbReference type="NCBI Taxonomy" id="398580"/>
    <lineage>
        <taxon>Bacteria</taxon>
        <taxon>Pseudomonadati</taxon>
        <taxon>Pseudomonadota</taxon>
        <taxon>Alphaproteobacteria</taxon>
        <taxon>Rhodobacterales</taxon>
        <taxon>Roseobacteraceae</taxon>
        <taxon>Dinoroseobacter</taxon>
    </lineage>
</organism>
<sequence length="450" mass="46473">MGVALIVLAAGQGSRMNSELPKVLHPLAGAPLLAHGLRAGAALDPARIVVVTGHGAAAVEAATAQLAPEAICVRQTEQLGTGHAVAQTAQALAGFGGDALVLYGDTPFISPETLLAMQAARAAGADMVVLGFEAADPGRYGRLVTDGDALLRIVEAKDATPDELALDLCNSGVMMADAQVLLRLVAGLSNDNASREYYLTDTIAAGRAEGLRARVVVCPEAETLGINTRTELAAAEQAFQARARARALEDGVTLADPATTHFAVDTVIGRDATIGPQVVFGPGVTVESGAEIRAFSHLEGCHVSRGARVGPFARLRPGAELAENTHVGNFVEIKNATLAQGAKVNHLSYIGDAAIGEASNVGAGTITCNYDGVFKHRTEIGARSFIGSNTCLVAPVRVGDEAMTATGTVVTQDIPDGAMAVGRTRQENKPGFARKFMTMLRARKSAKGAQ</sequence>
<feature type="chain" id="PRO_1000088130" description="Bifunctional protein GlmU">
    <location>
        <begin position="1"/>
        <end position="450"/>
    </location>
</feature>
<feature type="region of interest" description="Pyrophosphorylase" evidence="1">
    <location>
        <begin position="1"/>
        <end position="229"/>
    </location>
</feature>
<feature type="region of interest" description="Linker" evidence="1">
    <location>
        <begin position="230"/>
        <end position="250"/>
    </location>
</feature>
<feature type="region of interest" description="N-acetyltransferase" evidence="1">
    <location>
        <begin position="251"/>
        <end position="450"/>
    </location>
</feature>
<feature type="active site" description="Proton acceptor" evidence="1">
    <location>
        <position position="346"/>
    </location>
</feature>
<feature type="binding site" evidence="1">
    <location>
        <begin position="8"/>
        <end position="11"/>
    </location>
    <ligand>
        <name>UDP-N-acetyl-alpha-D-glucosamine</name>
        <dbReference type="ChEBI" id="CHEBI:57705"/>
    </ligand>
</feature>
<feature type="binding site" evidence="1">
    <location>
        <position position="22"/>
    </location>
    <ligand>
        <name>UDP-N-acetyl-alpha-D-glucosamine</name>
        <dbReference type="ChEBI" id="CHEBI:57705"/>
    </ligand>
</feature>
<feature type="binding site" evidence="1">
    <location>
        <position position="75"/>
    </location>
    <ligand>
        <name>UDP-N-acetyl-alpha-D-glucosamine</name>
        <dbReference type="ChEBI" id="CHEBI:57705"/>
    </ligand>
</feature>
<feature type="binding site" evidence="1">
    <location>
        <begin position="80"/>
        <end position="81"/>
    </location>
    <ligand>
        <name>UDP-N-acetyl-alpha-D-glucosamine</name>
        <dbReference type="ChEBI" id="CHEBI:57705"/>
    </ligand>
</feature>
<feature type="binding site" evidence="1">
    <location>
        <begin position="103"/>
        <end position="105"/>
    </location>
    <ligand>
        <name>UDP-N-acetyl-alpha-D-glucosamine</name>
        <dbReference type="ChEBI" id="CHEBI:57705"/>
    </ligand>
</feature>
<feature type="binding site" evidence="1">
    <location>
        <position position="105"/>
    </location>
    <ligand>
        <name>Mg(2+)</name>
        <dbReference type="ChEBI" id="CHEBI:18420"/>
    </ligand>
</feature>
<feature type="binding site" evidence="1">
    <location>
        <position position="141"/>
    </location>
    <ligand>
        <name>UDP-N-acetyl-alpha-D-glucosamine</name>
        <dbReference type="ChEBI" id="CHEBI:57705"/>
    </ligand>
</feature>
<feature type="binding site" evidence="1">
    <location>
        <position position="155"/>
    </location>
    <ligand>
        <name>UDP-N-acetyl-alpha-D-glucosamine</name>
        <dbReference type="ChEBI" id="CHEBI:57705"/>
    </ligand>
</feature>
<feature type="binding site" evidence="1">
    <location>
        <position position="170"/>
    </location>
    <ligand>
        <name>UDP-N-acetyl-alpha-D-glucosamine</name>
        <dbReference type="ChEBI" id="CHEBI:57705"/>
    </ligand>
</feature>
<feature type="binding site" evidence="1">
    <location>
        <position position="227"/>
    </location>
    <ligand>
        <name>Mg(2+)</name>
        <dbReference type="ChEBI" id="CHEBI:18420"/>
    </ligand>
</feature>
<feature type="binding site" evidence="1">
    <location>
        <position position="227"/>
    </location>
    <ligand>
        <name>UDP-N-acetyl-alpha-D-glucosamine</name>
        <dbReference type="ChEBI" id="CHEBI:57705"/>
    </ligand>
</feature>
<feature type="binding site" evidence="1">
    <location>
        <position position="316"/>
    </location>
    <ligand>
        <name>UDP-N-acetyl-alpha-D-glucosamine</name>
        <dbReference type="ChEBI" id="CHEBI:57705"/>
    </ligand>
</feature>
<feature type="binding site" evidence="1">
    <location>
        <position position="334"/>
    </location>
    <ligand>
        <name>UDP-N-acetyl-alpha-D-glucosamine</name>
        <dbReference type="ChEBI" id="CHEBI:57705"/>
    </ligand>
</feature>
<feature type="binding site" evidence="1">
    <location>
        <position position="349"/>
    </location>
    <ligand>
        <name>UDP-N-acetyl-alpha-D-glucosamine</name>
        <dbReference type="ChEBI" id="CHEBI:57705"/>
    </ligand>
</feature>
<feature type="binding site" evidence="1">
    <location>
        <position position="360"/>
    </location>
    <ligand>
        <name>UDP-N-acetyl-alpha-D-glucosamine</name>
        <dbReference type="ChEBI" id="CHEBI:57705"/>
    </ligand>
</feature>
<feature type="binding site" evidence="1">
    <location>
        <position position="363"/>
    </location>
    <ligand>
        <name>acetyl-CoA</name>
        <dbReference type="ChEBI" id="CHEBI:57288"/>
    </ligand>
</feature>
<feature type="binding site" evidence="1">
    <location>
        <begin position="369"/>
        <end position="370"/>
    </location>
    <ligand>
        <name>acetyl-CoA</name>
        <dbReference type="ChEBI" id="CHEBI:57288"/>
    </ligand>
</feature>
<feature type="binding site" evidence="1">
    <location>
        <position position="388"/>
    </location>
    <ligand>
        <name>acetyl-CoA</name>
        <dbReference type="ChEBI" id="CHEBI:57288"/>
    </ligand>
</feature>
<feature type="binding site" evidence="1">
    <location>
        <position position="406"/>
    </location>
    <ligand>
        <name>acetyl-CoA</name>
        <dbReference type="ChEBI" id="CHEBI:57288"/>
    </ligand>
</feature>
<feature type="binding site" evidence="1">
    <location>
        <position position="423"/>
    </location>
    <ligand>
        <name>acetyl-CoA</name>
        <dbReference type="ChEBI" id="CHEBI:57288"/>
    </ligand>
</feature>
<proteinExistence type="inferred from homology"/>
<accession>A8LIS2</accession>
<comment type="function">
    <text evidence="1">Catalyzes the last two sequential reactions in the de novo biosynthetic pathway for UDP-N-acetylglucosamine (UDP-GlcNAc). The C-terminal domain catalyzes the transfer of acetyl group from acetyl coenzyme A to glucosamine-1-phosphate (GlcN-1-P) to produce N-acetylglucosamine-1-phosphate (GlcNAc-1-P), which is converted into UDP-GlcNAc by the transfer of uridine 5-monophosphate (from uridine 5-triphosphate), a reaction catalyzed by the N-terminal domain.</text>
</comment>
<comment type="catalytic activity">
    <reaction evidence="1">
        <text>alpha-D-glucosamine 1-phosphate + acetyl-CoA = N-acetyl-alpha-D-glucosamine 1-phosphate + CoA + H(+)</text>
        <dbReference type="Rhea" id="RHEA:13725"/>
        <dbReference type="ChEBI" id="CHEBI:15378"/>
        <dbReference type="ChEBI" id="CHEBI:57287"/>
        <dbReference type="ChEBI" id="CHEBI:57288"/>
        <dbReference type="ChEBI" id="CHEBI:57776"/>
        <dbReference type="ChEBI" id="CHEBI:58516"/>
        <dbReference type="EC" id="2.3.1.157"/>
    </reaction>
</comment>
<comment type="catalytic activity">
    <reaction evidence="1">
        <text>N-acetyl-alpha-D-glucosamine 1-phosphate + UTP + H(+) = UDP-N-acetyl-alpha-D-glucosamine + diphosphate</text>
        <dbReference type="Rhea" id="RHEA:13509"/>
        <dbReference type="ChEBI" id="CHEBI:15378"/>
        <dbReference type="ChEBI" id="CHEBI:33019"/>
        <dbReference type="ChEBI" id="CHEBI:46398"/>
        <dbReference type="ChEBI" id="CHEBI:57705"/>
        <dbReference type="ChEBI" id="CHEBI:57776"/>
        <dbReference type="EC" id="2.7.7.23"/>
    </reaction>
</comment>
<comment type="cofactor">
    <cofactor evidence="1">
        <name>Mg(2+)</name>
        <dbReference type="ChEBI" id="CHEBI:18420"/>
    </cofactor>
    <text evidence="1">Binds 1 Mg(2+) ion per subunit.</text>
</comment>
<comment type="pathway">
    <text evidence="1">Nucleotide-sugar biosynthesis; UDP-N-acetyl-alpha-D-glucosamine biosynthesis; N-acetyl-alpha-D-glucosamine 1-phosphate from alpha-D-glucosamine 6-phosphate (route II): step 2/2.</text>
</comment>
<comment type="pathway">
    <text evidence="1">Nucleotide-sugar biosynthesis; UDP-N-acetyl-alpha-D-glucosamine biosynthesis; UDP-N-acetyl-alpha-D-glucosamine from N-acetyl-alpha-D-glucosamine 1-phosphate: step 1/1.</text>
</comment>
<comment type="pathway">
    <text evidence="1">Bacterial outer membrane biogenesis; LPS lipid A biosynthesis.</text>
</comment>
<comment type="subunit">
    <text evidence="1">Homotrimer.</text>
</comment>
<comment type="subcellular location">
    <subcellularLocation>
        <location evidence="1">Cytoplasm</location>
    </subcellularLocation>
</comment>
<comment type="similarity">
    <text evidence="1">In the N-terminal section; belongs to the N-acetylglucosamine-1-phosphate uridyltransferase family.</text>
</comment>
<comment type="similarity">
    <text evidence="1">In the C-terminal section; belongs to the transferase hexapeptide repeat family.</text>
</comment>
<keyword id="KW-0012">Acyltransferase</keyword>
<keyword id="KW-0133">Cell shape</keyword>
<keyword id="KW-0961">Cell wall biogenesis/degradation</keyword>
<keyword id="KW-0963">Cytoplasm</keyword>
<keyword id="KW-0460">Magnesium</keyword>
<keyword id="KW-0479">Metal-binding</keyword>
<keyword id="KW-0511">Multifunctional enzyme</keyword>
<keyword id="KW-0548">Nucleotidyltransferase</keyword>
<keyword id="KW-0573">Peptidoglycan synthesis</keyword>
<keyword id="KW-1185">Reference proteome</keyword>
<keyword id="KW-0677">Repeat</keyword>
<keyword id="KW-0808">Transferase</keyword>
<protein>
    <recommendedName>
        <fullName evidence="1">Bifunctional protein GlmU</fullName>
    </recommendedName>
    <domain>
        <recommendedName>
            <fullName evidence="1">UDP-N-acetylglucosamine pyrophosphorylase</fullName>
            <ecNumber evidence="1">2.7.7.23</ecNumber>
        </recommendedName>
        <alternativeName>
            <fullName evidence="1">N-acetylglucosamine-1-phosphate uridyltransferase</fullName>
        </alternativeName>
    </domain>
    <domain>
        <recommendedName>
            <fullName evidence="1">Glucosamine-1-phosphate N-acetyltransferase</fullName>
            <ecNumber evidence="1">2.3.1.157</ecNumber>
        </recommendedName>
    </domain>
</protein>
<reference key="1">
    <citation type="journal article" date="2010" name="ISME J.">
        <title>The complete genome sequence of the algal symbiont Dinoroseobacter shibae: a hitchhiker's guide to life in the sea.</title>
        <authorList>
            <person name="Wagner-Dobler I."/>
            <person name="Ballhausen B."/>
            <person name="Berger M."/>
            <person name="Brinkhoff T."/>
            <person name="Buchholz I."/>
            <person name="Bunk B."/>
            <person name="Cypionka H."/>
            <person name="Daniel R."/>
            <person name="Drepper T."/>
            <person name="Gerdts G."/>
            <person name="Hahnke S."/>
            <person name="Han C."/>
            <person name="Jahn D."/>
            <person name="Kalhoefer D."/>
            <person name="Kiss H."/>
            <person name="Klenk H.P."/>
            <person name="Kyrpides N."/>
            <person name="Liebl W."/>
            <person name="Liesegang H."/>
            <person name="Meincke L."/>
            <person name="Pati A."/>
            <person name="Petersen J."/>
            <person name="Piekarski T."/>
            <person name="Pommerenke C."/>
            <person name="Pradella S."/>
            <person name="Pukall R."/>
            <person name="Rabus R."/>
            <person name="Stackebrandt E."/>
            <person name="Thole S."/>
            <person name="Thompson L."/>
            <person name="Tielen P."/>
            <person name="Tomasch J."/>
            <person name="von Jan M."/>
            <person name="Wanphrut N."/>
            <person name="Wichels A."/>
            <person name="Zech H."/>
            <person name="Simon M."/>
        </authorList>
    </citation>
    <scope>NUCLEOTIDE SEQUENCE [LARGE SCALE GENOMIC DNA]</scope>
    <source>
        <strain>DSM 16493 / NCIMB 14021 / DFL 12</strain>
    </source>
</reference>
<dbReference type="EC" id="2.7.7.23" evidence="1"/>
<dbReference type="EC" id="2.3.1.157" evidence="1"/>
<dbReference type="EMBL" id="CP000830">
    <property type="protein sequence ID" value="ABV93036.1"/>
    <property type="molecule type" value="Genomic_DNA"/>
</dbReference>
<dbReference type="RefSeq" id="WP_012177966.1">
    <property type="nucleotide sequence ID" value="NC_009952.1"/>
</dbReference>
<dbReference type="SMR" id="A8LIS2"/>
<dbReference type="STRING" id="398580.Dshi_1294"/>
<dbReference type="KEGG" id="dsh:Dshi_1294"/>
<dbReference type="eggNOG" id="COG1207">
    <property type="taxonomic scope" value="Bacteria"/>
</dbReference>
<dbReference type="HOGENOM" id="CLU_029499_15_2_5"/>
<dbReference type="OrthoDB" id="9775031at2"/>
<dbReference type="UniPathway" id="UPA00113">
    <property type="reaction ID" value="UER00532"/>
</dbReference>
<dbReference type="UniPathway" id="UPA00113">
    <property type="reaction ID" value="UER00533"/>
</dbReference>
<dbReference type="UniPathway" id="UPA00973"/>
<dbReference type="Proteomes" id="UP000006833">
    <property type="component" value="Chromosome"/>
</dbReference>
<dbReference type="GO" id="GO:0005737">
    <property type="term" value="C:cytoplasm"/>
    <property type="evidence" value="ECO:0007669"/>
    <property type="project" value="UniProtKB-SubCell"/>
</dbReference>
<dbReference type="GO" id="GO:0016020">
    <property type="term" value="C:membrane"/>
    <property type="evidence" value="ECO:0007669"/>
    <property type="project" value="GOC"/>
</dbReference>
<dbReference type="GO" id="GO:0019134">
    <property type="term" value="F:glucosamine-1-phosphate N-acetyltransferase activity"/>
    <property type="evidence" value="ECO:0007669"/>
    <property type="project" value="UniProtKB-UniRule"/>
</dbReference>
<dbReference type="GO" id="GO:0000287">
    <property type="term" value="F:magnesium ion binding"/>
    <property type="evidence" value="ECO:0007669"/>
    <property type="project" value="UniProtKB-UniRule"/>
</dbReference>
<dbReference type="GO" id="GO:0003977">
    <property type="term" value="F:UDP-N-acetylglucosamine diphosphorylase activity"/>
    <property type="evidence" value="ECO:0007669"/>
    <property type="project" value="UniProtKB-UniRule"/>
</dbReference>
<dbReference type="GO" id="GO:0000902">
    <property type="term" value="P:cell morphogenesis"/>
    <property type="evidence" value="ECO:0007669"/>
    <property type="project" value="UniProtKB-UniRule"/>
</dbReference>
<dbReference type="GO" id="GO:0071555">
    <property type="term" value="P:cell wall organization"/>
    <property type="evidence" value="ECO:0007669"/>
    <property type="project" value="UniProtKB-KW"/>
</dbReference>
<dbReference type="GO" id="GO:0009245">
    <property type="term" value="P:lipid A biosynthetic process"/>
    <property type="evidence" value="ECO:0007669"/>
    <property type="project" value="UniProtKB-UniRule"/>
</dbReference>
<dbReference type="GO" id="GO:0009252">
    <property type="term" value="P:peptidoglycan biosynthetic process"/>
    <property type="evidence" value="ECO:0007669"/>
    <property type="project" value="UniProtKB-UniRule"/>
</dbReference>
<dbReference type="GO" id="GO:0008360">
    <property type="term" value="P:regulation of cell shape"/>
    <property type="evidence" value="ECO:0007669"/>
    <property type="project" value="UniProtKB-KW"/>
</dbReference>
<dbReference type="GO" id="GO:0006048">
    <property type="term" value="P:UDP-N-acetylglucosamine biosynthetic process"/>
    <property type="evidence" value="ECO:0007669"/>
    <property type="project" value="UniProtKB-UniPathway"/>
</dbReference>
<dbReference type="CDD" id="cd02540">
    <property type="entry name" value="GT2_GlmU_N_bac"/>
    <property type="match status" value="1"/>
</dbReference>
<dbReference type="CDD" id="cd03353">
    <property type="entry name" value="LbH_GlmU_C"/>
    <property type="match status" value="1"/>
</dbReference>
<dbReference type="Gene3D" id="2.160.10.10">
    <property type="entry name" value="Hexapeptide repeat proteins"/>
    <property type="match status" value="1"/>
</dbReference>
<dbReference type="Gene3D" id="3.90.550.10">
    <property type="entry name" value="Spore Coat Polysaccharide Biosynthesis Protein SpsA, Chain A"/>
    <property type="match status" value="1"/>
</dbReference>
<dbReference type="HAMAP" id="MF_01631">
    <property type="entry name" value="GlmU"/>
    <property type="match status" value="1"/>
</dbReference>
<dbReference type="InterPro" id="IPR005882">
    <property type="entry name" value="Bifunctional_GlmU"/>
</dbReference>
<dbReference type="InterPro" id="IPR050065">
    <property type="entry name" value="GlmU-like"/>
</dbReference>
<dbReference type="InterPro" id="IPR038009">
    <property type="entry name" value="GlmU_C_LbH"/>
</dbReference>
<dbReference type="InterPro" id="IPR001451">
    <property type="entry name" value="Hexapep"/>
</dbReference>
<dbReference type="InterPro" id="IPR025877">
    <property type="entry name" value="MobA-like_NTP_Trfase"/>
</dbReference>
<dbReference type="InterPro" id="IPR029044">
    <property type="entry name" value="Nucleotide-diphossugar_trans"/>
</dbReference>
<dbReference type="InterPro" id="IPR011004">
    <property type="entry name" value="Trimer_LpxA-like_sf"/>
</dbReference>
<dbReference type="NCBIfam" id="TIGR01173">
    <property type="entry name" value="glmU"/>
    <property type="match status" value="1"/>
</dbReference>
<dbReference type="NCBIfam" id="NF010933">
    <property type="entry name" value="PRK14353.1"/>
    <property type="match status" value="1"/>
</dbReference>
<dbReference type="PANTHER" id="PTHR43584:SF3">
    <property type="entry name" value="BIFUNCTIONAL PROTEIN GLMU"/>
    <property type="match status" value="1"/>
</dbReference>
<dbReference type="PANTHER" id="PTHR43584">
    <property type="entry name" value="NUCLEOTIDYL TRANSFERASE"/>
    <property type="match status" value="1"/>
</dbReference>
<dbReference type="Pfam" id="PF00132">
    <property type="entry name" value="Hexapep"/>
    <property type="match status" value="1"/>
</dbReference>
<dbReference type="Pfam" id="PF14602">
    <property type="entry name" value="Hexapep_2"/>
    <property type="match status" value="1"/>
</dbReference>
<dbReference type="Pfam" id="PF12804">
    <property type="entry name" value="NTP_transf_3"/>
    <property type="match status" value="1"/>
</dbReference>
<dbReference type="SUPFAM" id="SSF53448">
    <property type="entry name" value="Nucleotide-diphospho-sugar transferases"/>
    <property type="match status" value="1"/>
</dbReference>
<dbReference type="SUPFAM" id="SSF51161">
    <property type="entry name" value="Trimeric LpxA-like enzymes"/>
    <property type="match status" value="1"/>
</dbReference>
<evidence type="ECO:0000255" key="1">
    <source>
        <dbReference type="HAMAP-Rule" id="MF_01631"/>
    </source>
</evidence>